<name>VIV1_MAIZE</name>
<gene>
    <name type="primary">VP1</name>
</gene>
<evidence type="ECO:0000255" key="1">
    <source>
        <dbReference type="PROSITE-ProRule" id="PRU00326"/>
    </source>
</evidence>
<evidence type="ECO:0000256" key="2">
    <source>
        <dbReference type="SAM" id="MobiDB-lite"/>
    </source>
</evidence>
<keyword id="KW-0938">Abscisic acid signaling pathway</keyword>
<keyword id="KW-0010">Activator</keyword>
<keyword id="KW-0963">Cytoplasm</keyword>
<keyword id="KW-0217">Developmental protein</keyword>
<keyword id="KW-0238">DNA-binding</keyword>
<keyword id="KW-0539">Nucleus</keyword>
<keyword id="KW-1185">Reference proteome</keyword>
<keyword id="KW-0804">Transcription</keyword>
<keyword id="KW-0805">Transcription regulation</keyword>
<accession>P26307</accession>
<sequence>MEASSGSSPPHSQENPPEHGGDMGGAPAEEIGGEAADDFMFAEDTFPSLPDFPCLSSPSSSTFSSNSSSNSSSAYTNTAGRAGGEPSEPASAGEGFDALDDIDQLLDFASLSMPWDSEPFPGVSMMLENAMSAPPQPVGDGMSEEKAVPEGTTGGEEACMDASEGEELPRFFMEWLTSNRENISAEDLRGIRLRRSTIEAAAARLGGGRQGTMQLLKLILTWVQNHHLQRKRPRDVMEEEAGLHVQLPSPVANPPGYEFPAGGQDMAAGGGTSWMPHQQAFTPPAAYGGDAVYPSAAGQQYSFHQGPSTSSVVVNSQPFSPPPVGDMHGANMAWPQQYVPFPPPGASTGSYPMPQPFSPGFGGQYAGAGAGHLSVAPQRMAGVEASATKEARKKRMARQRRLSCLQQQRSQQLSLGQIQTSVHLQEPSPRSTHSGPVTPSAGGWGFWSPSSQQQVQNPLSKSNSSRAPPSSLEAAAAAPQTKPAPAGARQDDIHHRLAAASDKRQGAKADKNLRFLLQKVLKQSDVGSLGRIVLPKKEAEVHLPELKTRDGISIPMEDIGTSRVWNMRYRFWPNNKSRMYLLENTGEFVRSNELQEGDFIVIYSDVKSGKYLIRGVKVRPPPAQEQGSGSSGGGKHRPLCPAGPERAAAAGAPEDAVVDGVSGACKGRSPEGVRRVRQQGAGAMSQMAVSI</sequence>
<comment type="function">
    <text>Transcriptional activator specifically required for expression of the maturation program in the seed development. Probably potentiates the response to the seed-specific hormone abscisic acid (ABA). May bind to DNA indirectly.</text>
</comment>
<comment type="subcellular location">
    <subcellularLocation>
        <location>Cytoplasm</location>
    </subcellularLocation>
    <subcellularLocation>
        <location>Nucleus</location>
    </subcellularLocation>
</comment>
<comment type="tissue specificity">
    <text>Seed.</text>
</comment>
<comment type="developmental stage">
    <text>Between 10 and 30 days after pollination.</text>
</comment>
<reference key="1">
    <citation type="journal article" date="1991" name="Cell">
        <title>The Viviparous-1 developmental gene of maize encodes a novel transcriptional activator.</title>
        <authorList>
            <person name="McCarty D.R."/>
            <person name="Hattori T."/>
            <person name="Carson C.B."/>
            <person name="Vasil V."/>
            <person name="Lazar M."/>
            <person name="Vasil I.K."/>
        </authorList>
    </citation>
    <scope>NUCLEOTIDE SEQUENCE [MRNA]</scope>
    <source>
        <strain>cv. Wisconsin 22</strain>
    </source>
</reference>
<feature type="chain" id="PRO_0000111528" description="Regulatory protein viviparous-1">
    <location>
        <begin position="1"/>
        <end position="691"/>
    </location>
</feature>
<feature type="DNA-binding region" description="TF-B3" evidence="1">
    <location>
        <begin position="517"/>
        <end position="619"/>
    </location>
</feature>
<feature type="region of interest" description="Transcriptional activation">
    <location>
        <begin position="1"/>
        <end position="121"/>
    </location>
</feature>
<feature type="region of interest" description="Disordered" evidence="2">
    <location>
        <begin position="1"/>
        <end position="95"/>
    </location>
</feature>
<feature type="region of interest" description="Disordered" evidence="2">
    <location>
        <begin position="135"/>
        <end position="158"/>
    </location>
</feature>
<feature type="region of interest" description="Disordered" evidence="2">
    <location>
        <begin position="384"/>
        <end position="489"/>
    </location>
</feature>
<feature type="region of interest" description="Disordered" evidence="2">
    <location>
        <begin position="618"/>
        <end position="691"/>
    </location>
</feature>
<feature type="compositionally biased region" description="Polar residues" evidence="2">
    <location>
        <begin position="1"/>
        <end position="15"/>
    </location>
</feature>
<feature type="compositionally biased region" description="Acidic residues" evidence="2">
    <location>
        <begin position="31"/>
        <end position="41"/>
    </location>
</feature>
<feature type="compositionally biased region" description="Low complexity" evidence="2">
    <location>
        <begin position="56"/>
        <end position="73"/>
    </location>
</feature>
<feature type="compositionally biased region" description="Basic residues" evidence="2">
    <location>
        <begin position="391"/>
        <end position="401"/>
    </location>
</feature>
<feature type="compositionally biased region" description="Low complexity" evidence="2">
    <location>
        <begin position="402"/>
        <end position="419"/>
    </location>
</feature>
<feature type="compositionally biased region" description="Polar residues" evidence="2">
    <location>
        <begin position="420"/>
        <end position="437"/>
    </location>
</feature>
<feature type="compositionally biased region" description="Polar residues" evidence="2">
    <location>
        <begin position="448"/>
        <end position="459"/>
    </location>
</feature>
<feature type="compositionally biased region" description="Low complexity" evidence="2">
    <location>
        <begin position="460"/>
        <end position="488"/>
    </location>
</feature>
<feature type="compositionally biased region" description="Low complexity" evidence="2">
    <location>
        <begin position="642"/>
        <end position="661"/>
    </location>
</feature>
<proteinExistence type="evidence at transcript level"/>
<organism>
    <name type="scientific">Zea mays</name>
    <name type="common">Maize</name>
    <dbReference type="NCBI Taxonomy" id="4577"/>
    <lineage>
        <taxon>Eukaryota</taxon>
        <taxon>Viridiplantae</taxon>
        <taxon>Streptophyta</taxon>
        <taxon>Embryophyta</taxon>
        <taxon>Tracheophyta</taxon>
        <taxon>Spermatophyta</taxon>
        <taxon>Magnoliopsida</taxon>
        <taxon>Liliopsida</taxon>
        <taxon>Poales</taxon>
        <taxon>Poaceae</taxon>
        <taxon>PACMAD clade</taxon>
        <taxon>Panicoideae</taxon>
        <taxon>Andropogonodae</taxon>
        <taxon>Andropogoneae</taxon>
        <taxon>Tripsacinae</taxon>
        <taxon>Zea</taxon>
    </lineage>
</organism>
<protein>
    <recommendedName>
        <fullName>Regulatory protein viviparous-1</fullName>
    </recommendedName>
</protein>
<dbReference type="EMBL" id="M60214">
    <property type="protein sequence ID" value="AAA33506.1"/>
    <property type="molecule type" value="mRNA"/>
</dbReference>
<dbReference type="PIR" id="A40024">
    <property type="entry name" value="A40024"/>
</dbReference>
<dbReference type="RefSeq" id="NP_001105540.1">
    <property type="nucleotide sequence ID" value="NM_001112070.1"/>
</dbReference>
<dbReference type="SMR" id="P26307"/>
<dbReference type="FunCoup" id="P26307">
    <property type="interactions" value="3332"/>
</dbReference>
<dbReference type="STRING" id="4577.P26307"/>
<dbReference type="PaxDb" id="4577-GRMZM2G133398_P03"/>
<dbReference type="GeneID" id="542523"/>
<dbReference type="KEGG" id="zma:542523"/>
<dbReference type="MaizeGDB" id="65585"/>
<dbReference type="eggNOG" id="ENOG502QWRF">
    <property type="taxonomic scope" value="Eukaryota"/>
</dbReference>
<dbReference type="InParanoid" id="P26307"/>
<dbReference type="OrthoDB" id="757982at2759"/>
<dbReference type="Proteomes" id="UP000007305">
    <property type="component" value="Unplaced"/>
</dbReference>
<dbReference type="ExpressionAtlas" id="P26307">
    <property type="expression patterns" value="baseline and differential"/>
</dbReference>
<dbReference type="GO" id="GO:0005737">
    <property type="term" value="C:cytoplasm"/>
    <property type="evidence" value="ECO:0007669"/>
    <property type="project" value="UniProtKB-SubCell"/>
</dbReference>
<dbReference type="GO" id="GO:0005634">
    <property type="term" value="C:nucleus"/>
    <property type="evidence" value="ECO:0007669"/>
    <property type="project" value="UniProtKB-SubCell"/>
</dbReference>
<dbReference type="GO" id="GO:0003677">
    <property type="term" value="F:DNA binding"/>
    <property type="evidence" value="ECO:0007669"/>
    <property type="project" value="UniProtKB-KW"/>
</dbReference>
<dbReference type="GO" id="GO:0003700">
    <property type="term" value="F:DNA-binding transcription factor activity"/>
    <property type="evidence" value="ECO:0007669"/>
    <property type="project" value="InterPro"/>
</dbReference>
<dbReference type="GO" id="GO:0009738">
    <property type="term" value="P:abscisic acid-activated signaling pathway"/>
    <property type="evidence" value="ECO:0007669"/>
    <property type="project" value="UniProtKB-KW"/>
</dbReference>
<dbReference type="CDD" id="cd10015">
    <property type="entry name" value="BfiI_C_EcoRII_N_B3"/>
    <property type="match status" value="1"/>
</dbReference>
<dbReference type="FunFam" id="2.40.330.10:FF:000003">
    <property type="entry name" value="B3 domain-containing transcription factor FUS3"/>
    <property type="match status" value="1"/>
</dbReference>
<dbReference type="Gene3D" id="2.40.330.10">
    <property type="entry name" value="DNA-binding pseudobarrel domain"/>
    <property type="match status" value="1"/>
</dbReference>
<dbReference type="InterPro" id="IPR003340">
    <property type="entry name" value="B3_DNA-bd"/>
</dbReference>
<dbReference type="InterPro" id="IPR015300">
    <property type="entry name" value="DNA-bd_pseudobarrel_sf"/>
</dbReference>
<dbReference type="InterPro" id="IPR044800">
    <property type="entry name" value="LEC2-like"/>
</dbReference>
<dbReference type="PANTHER" id="PTHR31140">
    <property type="entry name" value="B3 DOMAIN-CONTAINING TRANSCRIPTION FACTOR ABI3"/>
    <property type="match status" value="1"/>
</dbReference>
<dbReference type="PANTHER" id="PTHR31140:SF81">
    <property type="entry name" value="B3 DOMAIN-CONTAINING TRANSCRIPTION FACTOR ABI3"/>
    <property type="match status" value="1"/>
</dbReference>
<dbReference type="Pfam" id="PF02362">
    <property type="entry name" value="B3"/>
    <property type="match status" value="1"/>
</dbReference>
<dbReference type="SMART" id="SM01019">
    <property type="entry name" value="B3"/>
    <property type="match status" value="1"/>
</dbReference>
<dbReference type="SUPFAM" id="SSF101936">
    <property type="entry name" value="DNA-binding pseudobarrel domain"/>
    <property type="match status" value="1"/>
</dbReference>
<dbReference type="PROSITE" id="PS50863">
    <property type="entry name" value="B3"/>
    <property type="match status" value="1"/>
</dbReference>